<dbReference type="EC" id="3.4.22.-"/>
<dbReference type="EMBL" id="X62163">
    <property type="protein sequence ID" value="CAA44094.1"/>
    <property type="molecule type" value="mRNA"/>
</dbReference>
<dbReference type="PIR" id="S25267">
    <property type="entry name" value="S25267"/>
</dbReference>
<dbReference type="SMR" id="P25775"/>
<dbReference type="MEROPS" id="C01.076"/>
<dbReference type="GlyCosmos" id="P25775">
    <property type="glycosylation" value="1 site, No reported glycans"/>
</dbReference>
<dbReference type="VEuPathDB" id="TriTrypDB:LmxM.19.1420"/>
<dbReference type="GO" id="GO:0008234">
    <property type="term" value="F:cysteine-type peptidase activity"/>
    <property type="evidence" value="ECO:0007669"/>
    <property type="project" value="UniProtKB-KW"/>
</dbReference>
<dbReference type="GO" id="GO:0006508">
    <property type="term" value="P:proteolysis"/>
    <property type="evidence" value="ECO:0007669"/>
    <property type="project" value="UniProtKB-KW"/>
</dbReference>
<dbReference type="CDD" id="cd02248">
    <property type="entry name" value="Peptidase_C1A"/>
    <property type="match status" value="1"/>
</dbReference>
<dbReference type="FunFam" id="3.90.70.10:FF:000138">
    <property type="entry name" value="Cruzipain"/>
    <property type="match status" value="1"/>
</dbReference>
<dbReference type="Gene3D" id="1.10.287.2250">
    <property type="match status" value="1"/>
</dbReference>
<dbReference type="Gene3D" id="3.90.70.10">
    <property type="entry name" value="Cysteine proteinases"/>
    <property type="match status" value="1"/>
</dbReference>
<dbReference type="InterPro" id="IPR038765">
    <property type="entry name" value="Papain-like_cys_pep_sf"/>
</dbReference>
<dbReference type="InterPro" id="IPR025661">
    <property type="entry name" value="Pept_asp_AS"/>
</dbReference>
<dbReference type="InterPro" id="IPR000169">
    <property type="entry name" value="Pept_cys_AS"/>
</dbReference>
<dbReference type="InterPro" id="IPR025660">
    <property type="entry name" value="Pept_his_AS"/>
</dbReference>
<dbReference type="InterPro" id="IPR013128">
    <property type="entry name" value="Peptidase_C1A"/>
</dbReference>
<dbReference type="InterPro" id="IPR000668">
    <property type="entry name" value="Peptidase_C1A_C"/>
</dbReference>
<dbReference type="InterPro" id="IPR039417">
    <property type="entry name" value="Peptidase_C1A_papain-like"/>
</dbReference>
<dbReference type="InterPro" id="IPR013201">
    <property type="entry name" value="Prot_inhib_I29"/>
</dbReference>
<dbReference type="PANTHER" id="PTHR12411">
    <property type="entry name" value="CYSTEINE PROTEASE FAMILY C1-RELATED"/>
    <property type="match status" value="1"/>
</dbReference>
<dbReference type="Pfam" id="PF08246">
    <property type="entry name" value="Inhibitor_I29"/>
    <property type="match status" value="1"/>
</dbReference>
<dbReference type="Pfam" id="PF00112">
    <property type="entry name" value="Peptidase_C1"/>
    <property type="match status" value="1"/>
</dbReference>
<dbReference type="PRINTS" id="PR00705">
    <property type="entry name" value="PAPAIN"/>
</dbReference>
<dbReference type="SMART" id="SM00848">
    <property type="entry name" value="Inhibitor_I29"/>
    <property type="match status" value="1"/>
</dbReference>
<dbReference type="SMART" id="SM00645">
    <property type="entry name" value="Pept_C1"/>
    <property type="match status" value="1"/>
</dbReference>
<dbReference type="SUPFAM" id="SSF54001">
    <property type="entry name" value="Cysteine proteinases"/>
    <property type="match status" value="1"/>
</dbReference>
<dbReference type="PROSITE" id="PS00640">
    <property type="entry name" value="THIOL_PROTEASE_ASN"/>
    <property type="match status" value="1"/>
</dbReference>
<dbReference type="PROSITE" id="PS00139">
    <property type="entry name" value="THIOL_PROTEASE_CYS"/>
    <property type="match status" value="1"/>
</dbReference>
<dbReference type="PROSITE" id="PS00639">
    <property type="entry name" value="THIOL_PROTEASE_HIS"/>
    <property type="match status" value="1"/>
</dbReference>
<organism>
    <name type="scientific">Leishmania mexicana</name>
    <dbReference type="NCBI Taxonomy" id="5665"/>
    <lineage>
        <taxon>Eukaryota</taxon>
        <taxon>Discoba</taxon>
        <taxon>Euglenozoa</taxon>
        <taxon>Kinetoplastea</taxon>
        <taxon>Metakinetoplastina</taxon>
        <taxon>Trypanosomatida</taxon>
        <taxon>Trypanosomatidae</taxon>
        <taxon>Leishmaniinae</taxon>
        <taxon>Leishmania</taxon>
    </lineage>
</organism>
<comment type="developmental stage">
    <text>Expressed in all life-cycle stages but at higher levels in the amastigote stage in the mammal and in stationary phase promastigote cultures which contain the infective metacyclic form of the parasite.</text>
</comment>
<comment type="similarity">
    <text evidence="3 4 5">Belongs to the peptidase C1 family.</text>
</comment>
<evidence type="ECO:0000250" key="1"/>
<evidence type="ECO:0000255" key="2"/>
<evidence type="ECO:0000255" key="3">
    <source>
        <dbReference type="PROSITE-ProRule" id="PRU10088"/>
    </source>
</evidence>
<evidence type="ECO:0000255" key="4">
    <source>
        <dbReference type="PROSITE-ProRule" id="PRU10089"/>
    </source>
</evidence>
<evidence type="ECO:0000255" key="5">
    <source>
        <dbReference type="PROSITE-ProRule" id="PRU10090"/>
    </source>
</evidence>
<evidence type="ECO:0000305" key="6"/>
<feature type="signal peptide" evidence="2">
    <location>
        <begin position="1"/>
        <end position="24"/>
    </location>
</feature>
<feature type="propeptide" id="PRO_0000026380" description="Activation peptide" evidence="6">
    <location>
        <begin position="25"/>
        <end position="125"/>
    </location>
</feature>
<feature type="chain" id="PRO_0000026381" description="Cysteine proteinase A">
    <location>
        <begin position="126"/>
        <end position="354"/>
    </location>
</feature>
<feature type="active site" evidence="1">
    <location>
        <position position="153"/>
    </location>
</feature>
<feature type="active site" evidence="1">
    <location>
        <position position="289"/>
    </location>
</feature>
<feature type="active site" evidence="1">
    <location>
        <position position="309"/>
    </location>
</feature>
<feature type="glycosylation site" description="N-linked (GlcNAc...) asparagine" evidence="2">
    <location>
        <position position="208"/>
    </location>
</feature>
<feature type="disulfide bond" evidence="1">
    <location>
        <begin position="150"/>
        <end position="191"/>
    </location>
</feature>
<feature type="disulfide bond" evidence="1">
    <location>
        <begin position="184"/>
        <end position="229"/>
    </location>
</feature>
<feature type="disulfide bond" evidence="1">
    <location>
        <begin position="282"/>
        <end position="330"/>
    </location>
</feature>
<proteinExistence type="evidence at transcript level"/>
<keyword id="KW-1015">Disulfide bond</keyword>
<keyword id="KW-0325">Glycoprotein</keyword>
<keyword id="KW-0378">Hydrolase</keyword>
<keyword id="KW-0645">Protease</keyword>
<keyword id="KW-0732">Signal</keyword>
<keyword id="KW-0788">Thiol protease</keyword>
<keyword id="KW-0865">Zymogen</keyword>
<name>LMCPA_LEIME</name>
<gene>
    <name type="primary">LMCPA</name>
</gene>
<reference key="1">
    <citation type="journal article" date="1992" name="Mol. Microbiol.">
        <title>A developmentally regulated cysteine proteinase gene of Leishmania mexicana.</title>
        <authorList>
            <person name="Mottram J.C."/>
            <person name="Robertson C.D."/>
            <person name="Coombs G.H."/>
            <person name="Barry J.D."/>
        </authorList>
    </citation>
    <scope>NUCLEOTIDE SEQUENCE [MRNA]</scope>
    <source>
        <strain>MNYC/BZ/62/M379</strain>
    </source>
</reference>
<sequence length="354" mass="38745">MARRNPLLFAIVVTILFVVCYGSALIAQTPPPVDNFVASAHYGSFKKRHGKAFGGDAEEGHRFNAFKQNMQTAYFLNTQNPHAHYDVSGKFADLTPQEFAKLYLNPDYYARHLKNHKEDVHVDDSAPSGVMSVDWRDKGAVTPVKNQGLCGSCWAFSAIGNIEGQWAASGHSLVSLSEQMLVSCDNIDEGCNGGLMDQAMNWIMQSHNGSVFTEASYPYTSGGGTRPPCHDEGEVGAKITGFLSLPHDEERIAEWVEKRGPVAVAVDATTWQLYFGGVVSLCLAWSLNHGVLIVGFNKNAKPPYWIVKNSWGSSWGEKGYIRLAMGSNQCMLKNYPVSATVESPHTPHVPTTTA</sequence>
<accession>P25775</accession>
<protein>
    <recommendedName>
        <fullName>Cysteine proteinase A</fullName>
        <ecNumber>3.4.22.-</ecNumber>
    </recommendedName>
</protein>